<sequence>MASADELDRREREILRALVQDYIHTGEPVASQPLLSRHELEWSPATVRSVMADLEALGFLEKPHASSGRIPTERGYRLFVDTMLKVRPPSVADRDRIERLAQAAPDVSSLIEGTADLLHSLSHHAGVVTTPRPQADPVRQLEFVRLRENRVLVVFVSEAGIVTNKLVQLEFAMEPAELERAAAYLNEKLHARADAAELAALRAAILTDMRADQSALHDLLQKALVLAEQSFAGTGVEKVVMEGESSFLDAPEFSDVQKARALLRGFAEKDRILRVLDRVLTAQEVQIFIGAESEFATVPDVSVVAAPYGRGDRVLGTLAVVGPTRMNYARVIPLVDLTARQISRALAALSEGG</sequence>
<keyword id="KW-0678">Repressor</keyword>
<keyword id="KW-0346">Stress response</keyword>
<keyword id="KW-0804">Transcription</keyword>
<keyword id="KW-0805">Transcription regulation</keyword>
<gene>
    <name evidence="1" type="primary">hrcA</name>
    <name type="ordered locus">A2cp1_4485</name>
</gene>
<organism>
    <name type="scientific">Anaeromyxobacter dehalogenans (strain 2CP-1 / ATCC BAA-258)</name>
    <dbReference type="NCBI Taxonomy" id="455488"/>
    <lineage>
        <taxon>Bacteria</taxon>
        <taxon>Pseudomonadati</taxon>
        <taxon>Myxococcota</taxon>
        <taxon>Myxococcia</taxon>
        <taxon>Myxococcales</taxon>
        <taxon>Cystobacterineae</taxon>
        <taxon>Anaeromyxobacteraceae</taxon>
        <taxon>Anaeromyxobacter</taxon>
    </lineage>
</organism>
<evidence type="ECO:0000255" key="1">
    <source>
        <dbReference type="HAMAP-Rule" id="MF_00081"/>
    </source>
</evidence>
<dbReference type="EMBL" id="CP001359">
    <property type="protein sequence ID" value="ACL67802.1"/>
    <property type="molecule type" value="Genomic_DNA"/>
</dbReference>
<dbReference type="RefSeq" id="WP_012528413.1">
    <property type="nucleotide sequence ID" value="NC_011891.1"/>
</dbReference>
<dbReference type="SMR" id="B8JCT2"/>
<dbReference type="KEGG" id="acp:A2cp1_4485"/>
<dbReference type="HOGENOM" id="CLU_050019_0_0_7"/>
<dbReference type="Proteomes" id="UP000007089">
    <property type="component" value="Chromosome"/>
</dbReference>
<dbReference type="GO" id="GO:0003677">
    <property type="term" value="F:DNA binding"/>
    <property type="evidence" value="ECO:0007669"/>
    <property type="project" value="InterPro"/>
</dbReference>
<dbReference type="GO" id="GO:0045892">
    <property type="term" value="P:negative regulation of DNA-templated transcription"/>
    <property type="evidence" value="ECO:0007669"/>
    <property type="project" value="UniProtKB-UniRule"/>
</dbReference>
<dbReference type="Gene3D" id="3.30.450.40">
    <property type="match status" value="1"/>
</dbReference>
<dbReference type="Gene3D" id="3.30.390.60">
    <property type="entry name" value="Heat-inducible transcription repressor hrca homolog, domain 3"/>
    <property type="match status" value="1"/>
</dbReference>
<dbReference type="Gene3D" id="1.10.10.10">
    <property type="entry name" value="Winged helix-like DNA-binding domain superfamily/Winged helix DNA-binding domain"/>
    <property type="match status" value="1"/>
</dbReference>
<dbReference type="HAMAP" id="MF_00081">
    <property type="entry name" value="HrcA"/>
    <property type="match status" value="1"/>
</dbReference>
<dbReference type="InterPro" id="IPR029016">
    <property type="entry name" value="GAF-like_dom_sf"/>
</dbReference>
<dbReference type="InterPro" id="IPR002571">
    <property type="entry name" value="HrcA"/>
</dbReference>
<dbReference type="InterPro" id="IPR021153">
    <property type="entry name" value="HrcA_C"/>
</dbReference>
<dbReference type="InterPro" id="IPR036388">
    <property type="entry name" value="WH-like_DNA-bd_sf"/>
</dbReference>
<dbReference type="InterPro" id="IPR036390">
    <property type="entry name" value="WH_DNA-bd_sf"/>
</dbReference>
<dbReference type="InterPro" id="IPR005104">
    <property type="entry name" value="WHTH_HrcA_DNA-bd"/>
</dbReference>
<dbReference type="InterPro" id="IPR023120">
    <property type="entry name" value="WHTH_transcript_rep_HrcA_IDD"/>
</dbReference>
<dbReference type="NCBIfam" id="TIGR00331">
    <property type="entry name" value="hrcA"/>
    <property type="match status" value="1"/>
</dbReference>
<dbReference type="PANTHER" id="PTHR34824">
    <property type="entry name" value="HEAT-INDUCIBLE TRANSCRIPTION REPRESSOR HRCA"/>
    <property type="match status" value="1"/>
</dbReference>
<dbReference type="PANTHER" id="PTHR34824:SF1">
    <property type="entry name" value="HEAT-INDUCIBLE TRANSCRIPTION REPRESSOR HRCA"/>
    <property type="match status" value="1"/>
</dbReference>
<dbReference type="Pfam" id="PF01628">
    <property type="entry name" value="HrcA"/>
    <property type="match status" value="1"/>
</dbReference>
<dbReference type="Pfam" id="PF03444">
    <property type="entry name" value="HrcA_DNA-bdg"/>
    <property type="match status" value="1"/>
</dbReference>
<dbReference type="PIRSF" id="PIRSF005485">
    <property type="entry name" value="HrcA"/>
    <property type="match status" value="1"/>
</dbReference>
<dbReference type="SUPFAM" id="SSF55781">
    <property type="entry name" value="GAF domain-like"/>
    <property type="match status" value="1"/>
</dbReference>
<dbReference type="SUPFAM" id="SSF46785">
    <property type="entry name" value="Winged helix' DNA-binding domain"/>
    <property type="match status" value="1"/>
</dbReference>
<feature type="chain" id="PRO_1000118284" description="Heat-inducible transcription repressor HrcA">
    <location>
        <begin position="1"/>
        <end position="353"/>
    </location>
</feature>
<name>HRCA_ANAD2</name>
<reference key="1">
    <citation type="submission" date="2009-01" db="EMBL/GenBank/DDBJ databases">
        <title>Complete sequence of Anaeromyxobacter dehalogenans 2CP-1.</title>
        <authorList>
            <person name="Lucas S."/>
            <person name="Copeland A."/>
            <person name="Lapidus A."/>
            <person name="Glavina del Rio T."/>
            <person name="Dalin E."/>
            <person name="Tice H."/>
            <person name="Bruce D."/>
            <person name="Goodwin L."/>
            <person name="Pitluck S."/>
            <person name="Saunders E."/>
            <person name="Brettin T."/>
            <person name="Detter J.C."/>
            <person name="Han C."/>
            <person name="Larimer F."/>
            <person name="Land M."/>
            <person name="Hauser L."/>
            <person name="Kyrpides N."/>
            <person name="Ovchinnikova G."/>
            <person name="Beliaev A.S."/>
            <person name="Richardson P."/>
        </authorList>
    </citation>
    <scope>NUCLEOTIDE SEQUENCE [LARGE SCALE GENOMIC DNA]</scope>
    <source>
        <strain>2CP-1 / ATCC BAA-258</strain>
    </source>
</reference>
<comment type="function">
    <text evidence="1">Negative regulator of class I heat shock genes (grpE-dnaK-dnaJ and groELS operons). Prevents heat-shock induction of these operons.</text>
</comment>
<comment type="similarity">
    <text evidence="1">Belongs to the HrcA family.</text>
</comment>
<accession>B8JCT2</accession>
<proteinExistence type="inferred from homology"/>
<protein>
    <recommendedName>
        <fullName evidence="1">Heat-inducible transcription repressor HrcA</fullName>
    </recommendedName>
</protein>